<keyword id="KW-0539">Nucleus</keyword>
<keyword id="KW-1185">Reference proteome</keyword>
<dbReference type="EMBL" id="U64033">
    <property type="protein sequence ID" value="AAB09547.1"/>
    <property type="status" value="ALT_INIT"/>
    <property type="molecule type" value="mRNA"/>
</dbReference>
<dbReference type="EMBL" id="AK046519">
    <property type="protein sequence ID" value="BAC32768.1"/>
    <property type="molecule type" value="mRNA"/>
</dbReference>
<dbReference type="EMBL" id="AK145384">
    <property type="protein sequence ID" value="BAE26402.1"/>
    <property type="molecule type" value="mRNA"/>
</dbReference>
<dbReference type="EMBL" id="AK166569">
    <property type="protein sequence ID" value="BAE38860.1"/>
    <property type="molecule type" value="mRNA"/>
</dbReference>
<dbReference type="EMBL" id="BC076599">
    <property type="protein sequence ID" value="AAH76599.1"/>
    <property type="molecule type" value="mRNA"/>
</dbReference>
<dbReference type="CCDS" id="CCDS20713.1"/>
<dbReference type="RefSeq" id="NP_001342574.1">
    <property type="nucleotide sequence ID" value="NM_001355645.2"/>
</dbReference>
<dbReference type="RefSeq" id="NP_001398185.1">
    <property type="nucleotide sequence ID" value="NM_001411256.1"/>
</dbReference>
<dbReference type="RefSeq" id="NP_001398186.1">
    <property type="nucleotide sequence ID" value="NM_001411257.1"/>
</dbReference>
<dbReference type="RefSeq" id="NP_001398187.1">
    <property type="nucleotide sequence ID" value="NM_001411258.1"/>
</dbReference>
<dbReference type="RefSeq" id="NP_001398188.1">
    <property type="nucleotide sequence ID" value="NM_001411259.1"/>
</dbReference>
<dbReference type="RefSeq" id="NP_001398189.1">
    <property type="nucleotide sequence ID" value="NM_001411260.1"/>
</dbReference>
<dbReference type="RefSeq" id="NP_001398190.1">
    <property type="nucleotide sequence ID" value="NM_001411261.1"/>
</dbReference>
<dbReference type="RefSeq" id="NP_001398191.1">
    <property type="nucleotide sequence ID" value="NM_001411262.1"/>
</dbReference>
<dbReference type="RefSeq" id="NP_062617.2">
    <property type="nucleotide sequence ID" value="NM_019643.5"/>
</dbReference>
<dbReference type="RefSeq" id="XP_006507137.1">
    <property type="nucleotide sequence ID" value="XM_006507074.3"/>
</dbReference>
<dbReference type="RefSeq" id="XP_006507138.1">
    <property type="nucleotide sequence ID" value="XM_006507075.2"/>
</dbReference>
<dbReference type="BioGRID" id="207890">
    <property type="interactions" value="16"/>
</dbReference>
<dbReference type="ComplexPortal" id="CPX-3441">
    <property type="entry name" value="SIN3A histone deacetylase complex, ES cell-specific variant"/>
</dbReference>
<dbReference type="FunCoup" id="Q8C8M1">
    <property type="interactions" value="1983"/>
</dbReference>
<dbReference type="IntAct" id="Q8C8M1">
    <property type="interactions" value="15"/>
</dbReference>
<dbReference type="STRING" id="10090.ENSMUSP00000145487"/>
<dbReference type="iPTMnet" id="Q8C8M1"/>
<dbReference type="PhosphoSitePlus" id="Q8C8M1"/>
<dbReference type="PaxDb" id="10090-ENSMUSP00000107188"/>
<dbReference type="PeptideAtlas" id="Q8C8M1"/>
<dbReference type="ProteomicsDB" id="257224"/>
<dbReference type="Antibodypedia" id="24652">
    <property type="antibodies" value="42 antibodies from 12 providers"/>
</dbReference>
<dbReference type="Ensembl" id="ENSMUST00000054080.15">
    <property type="protein sequence ID" value="ENSMUSP00000050952.9"/>
    <property type="gene ID" value="ENSMUSG00000039985.15"/>
</dbReference>
<dbReference type="Ensembl" id="ENSMUST00000081956.12">
    <property type="protein sequence ID" value="ENSMUSP00000107188.2"/>
    <property type="gene ID" value="ENSMUSG00000039985.15"/>
</dbReference>
<dbReference type="Ensembl" id="ENSMUST00000111562.8">
    <property type="protein sequence ID" value="ENSMUSP00000107187.2"/>
    <property type="gene ID" value="ENSMUSG00000039985.15"/>
</dbReference>
<dbReference type="Ensembl" id="ENSMUST00000204435.3">
    <property type="protein sequence ID" value="ENSMUSP00000145487.2"/>
    <property type="gene ID" value="ENSMUSG00000039985.15"/>
</dbReference>
<dbReference type="GeneID" id="56306"/>
<dbReference type="KEGG" id="mmu:56306"/>
<dbReference type="UCSC" id="uc009etq.1">
    <property type="organism name" value="mouse"/>
</dbReference>
<dbReference type="AGR" id="MGI:1929091"/>
<dbReference type="CTD" id="58516"/>
<dbReference type="MGI" id="MGI:1929091">
    <property type="gene designation" value="Sinhcaf"/>
</dbReference>
<dbReference type="VEuPathDB" id="HostDB:ENSMUSG00000039985"/>
<dbReference type="eggNOG" id="ENOG502QSAG">
    <property type="taxonomic scope" value="Eukaryota"/>
</dbReference>
<dbReference type="GeneTree" id="ENSGT00390000006485"/>
<dbReference type="HOGENOM" id="CLU_049492_0_0_1"/>
<dbReference type="InParanoid" id="Q8C8M1"/>
<dbReference type="OMA" id="TPTCEEN"/>
<dbReference type="OrthoDB" id="10023333at2759"/>
<dbReference type="PhylomeDB" id="Q8C8M1"/>
<dbReference type="TreeFam" id="TF323911"/>
<dbReference type="BioGRID-ORCS" id="56306">
    <property type="hits" value="9 hits in 72 CRISPR screens"/>
</dbReference>
<dbReference type="ChiTaRS" id="Sinhcaf">
    <property type="organism name" value="mouse"/>
</dbReference>
<dbReference type="PRO" id="PR:Q8C8M1"/>
<dbReference type="Proteomes" id="UP000000589">
    <property type="component" value="Chromosome 6"/>
</dbReference>
<dbReference type="RNAct" id="Q8C8M1">
    <property type="molecule type" value="protein"/>
</dbReference>
<dbReference type="Bgee" id="ENSMUSG00000039985">
    <property type="expression patterns" value="Expressed in undifferentiated genital tubercle and 68 other cell types or tissues"/>
</dbReference>
<dbReference type="ExpressionAtlas" id="Q8C8M1">
    <property type="expression patterns" value="baseline and differential"/>
</dbReference>
<dbReference type="GO" id="GO:0005634">
    <property type="term" value="C:nucleus"/>
    <property type="evidence" value="ECO:0000303"/>
    <property type="project" value="ComplexPortal"/>
</dbReference>
<dbReference type="GO" id="GO:0070822">
    <property type="term" value="C:Sin3-type complex"/>
    <property type="evidence" value="ECO:0000250"/>
    <property type="project" value="UniProtKB"/>
</dbReference>
<dbReference type="GO" id="GO:0045596">
    <property type="term" value="P:negative regulation of cell differentiation"/>
    <property type="evidence" value="ECO:0000315"/>
    <property type="project" value="UniProtKB"/>
</dbReference>
<dbReference type="GO" id="GO:0030336">
    <property type="term" value="P:negative regulation of cell migration"/>
    <property type="evidence" value="ECO:0000250"/>
    <property type="project" value="UniProtKB"/>
</dbReference>
<dbReference type="GO" id="GO:1902455">
    <property type="term" value="P:negative regulation of stem cell population maintenance"/>
    <property type="evidence" value="ECO:0000303"/>
    <property type="project" value="ComplexPortal"/>
</dbReference>
<dbReference type="GO" id="GO:0000122">
    <property type="term" value="P:negative regulation of transcription by RNA polymerase II"/>
    <property type="evidence" value="ECO:0000303"/>
    <property type="project" value="ComplexPortal"/>
</dbReference>
<dbReference type="GO" id="GO:0030512">
    <property type="term" value="P:negative regulation of transforming growth factor beta receptor signaling pathway"/>
    <property type="evidence" value="ECO:0000303"/>
    <property type="project" value="ComplexPortal"/>
</dbReference>
<dbReference type="GO" id="GO:0008284">
    <property type="term" value="P:positive regulation of cell population proliferation"/>
    <property type="evidence" value="ECO:0000315"/>
    <property type="project" value="UniProtKB"/>
</dbReference>
<dbReference type="GO" id="GO:1902459">
    <property type="term" value="P:positive regulation of stem cell population maintenance"/>
    <property type="evidence" value="ECO:0000303"/>
    <property type="project" value="ComplexPortal"/>
</dbReference>
<dbReference type="InterPro" id="IPR026065">
    <property type="entry name" value="FAM60A"/>
</dbReference>
<dbReference type="PANTHER" id="PTHR13422">
    <property type="entry name" value="SIN3-HDAC COMPLEX-ASSOCIATED FACTOR"/>
    <property type="match status" value="1"/>
</dbReference>
<dbReference type="PANTHER" id="PTHR13422:SF12">
    <property type="entry name" value="SIN3-HDAC COMPLEX-ASSOCIATED FACTOR"/>
    <property type="match status" value="1"/>
</dbReference>
<dbReference type="Pfam" id="PF15396">
    <property type="entry name" value="FAM60A"/>
    <property type="match status" value="1"/>
</dbReference>
<name>SHCAF_MOUSE</name>
<proteinExistence type="evidence at protein level"/>
<comment type="function">
    <text evidence="1 3">Subunit of the Sin3 deacetylase complex (Sin3/HDAC), this subunit is important for the repression of genes encoding components of the TGF-beta signaling pathway (By similarity). Core component of a SIN3A complex (composed of at least SINHCAF, SIN3A, HDAC1, SAP30, RBBP4, OGT and TET1) present in embryonic stem (ES) cells. Promotes the stability of SIN3A and its presence on chromatin and is essential for maintaining the potential of ES cells to proliferate rapidly, while ensuring a short G1-phase of the cell cycle, thereby preventing premature lineage priming (PubMed:28554894).</text>
</comment>
<comment type="subunit">
    <text evidence="1 3">Component of the Sin3/HDAC corepressor complex at least composed of BRMS1, BRMS1L, ING2, SAP30, SAP30L, HDAC1 (By similarity). Found in a complex composed of at least SINHCAF, SIN3A, HDAC1, SAP30, RBBP4, OGT and TET1. Interacts with SIN3A and OGT (PubMed:28554894).</text>
</comment>
<comment type="subcellular location">
    <subcellularLocation>
        <location evidence="3">Nucleus</location>
    </subcellularLocation>
</comment>
<comment type="tissue specificity">
    <text evidence="3">Embryonic stem cells (at protein level).</text>
</comment>
<comment type="similarity">
    <text evidence="5">Belongs to the SINHCAF family.</text>
</comment>
<comment type="sequence caution" evidence="5">
    <conflict type="erroneous initiation">
        <sequence resource="EMBL-CDS" id="AAB09547"/>
    </conflict>
    <text>Extended N-terminus.</text>
</comment>
<organism>
    <name type="scientific">Mus musculus</name>
    <name type="common">Mouse</name>
    <dbReference type="NCBI Taxonomy" id="10090"/>
    <lineage>
        <taxon>Eukaryota</taxon>
        <taxon>Metazoa</taxon>
        <taxon>Chordata</taxon>
        <taxon>Craniata</taxon>
        <taxon>Vertebrata</taxon>
        <taxon>Euteleostomi</taxon>
        <taxon>Mammalia</taxon>
        <taxon>Eutheria</taxon>
        <taxon>Euarchontoglires</taxon>
        <taxon>Glires</taxon>
        <taxon>Rodentia</taxon>
        <taxon>Myomorpha</taxon>
        <taxon>Muroidea</taxon>
        <taxon>Muridae</taxon>
        <taxon>Murinae</taxon>
        <taxon>Mus</taxon>
        <taxon>Mus</taxon>
    </lineage>
</organism>
<protein>
    <recommendedName>
        <fullName>SIN3-HDAC complex-associated factor</fullName>
    </recommendedName>
    <alternativeName>
        <fullName>Protein FAM60A</fullName>
    </alternativeName>
    <alternativeName>
        <fullName evidence="4">Tera protein</fullName>
    </alternativeName>
</protein>
<reference key="1">
    <citation type="submission" date="1996-07" db="EMBL/GenBank/DDBJ databases">
        <title>A new mouse gene with restricted expression pattern.</title>
        <authorList>
            <person name="Malnar-Dragojevic D."/>
            <person name="Trachtulec Z."/>
            <person name="Vincek V."/>
        </authorList>
    </citation>
    <scope>NUCLEOTIDE SEQUENCE [MRNA]</scope>
    <source>
        <tissue>Teratocarcinoma</tissue>
    </source>
</reference>
<reference key="2">
    <citation type="journal article" date="2005" name="Science">
        <title>The transcriptional landscape of the mammalian genome.</title>
        <authorList>
            <person name="Carninci P."/>
            <person name="Kasukawa T."/>
            <person name="Katayama S."/>
            <person name="Gough J."/>
            <person name="Frith M.C."/>
            <person name="Maeda N."/>
            <person name="Oyama R."/>
            <person name="Ravasi T."/>
            <person name="Lenhard B."/>
            <person name="Wells C."/>
            <person name="Kodzius R."/>
            <person name="Shimokawa K."/>
            <person name="Bajic V.B."/>
            <person name="Brenner S.E."/>
            <person name="Batalov S."/>
            <person name="Forrest A.R."/>
            <person name="Zavolan M."/>
            <person name="Davis M.J."/>
            <person name="Wilming L.G."/>
            <person name="Aidinis V."/>
            <person name="Allen J.E."/>
            <person name="Ambesi-Impiombato A."/>
            <person name="Apweiler R."/>
            <person name="Aturaliya R.N."/>
            <person name="Bailey T.L."/>
            <person name="Bansal M."/>
            <person name="Baxter L."/>
            <person name="Beisel K.W."/>
            <person name="Bersano T."/>
            <person name="Bono H."/>
            <person name="Chalk A.M."/>
            <person name="Chiu K.P."/>
            <person name="Choudhary V."/>
            <person name="Christoffels A."/>
            <person name="Clutterbuck D.R."/>
            <person name="Crowe M.L."/>
            <person name="Dalla E."/>
            <person name="Dalrymple B.P."/>
            <person name="de Bono B."/>
            <person name="Della Gatta G."/>
            <person name="di Bernardo D."/>
            <person name="Down T."/>
            <person name="Engstrom P."/>
            <person name="Fagiolini M."/>
            <person name="Faulkner G."/>
            <person name="Fletcher C.F."/>
            <person name="Fukushima T."/>
            <person name="Furuno M."/>
            <person name="Futaki S."/>
            <person name="Gariboldi M."/>
            <person name="Georgii-Hemming P."/>
            <person name="Gingeras T.R."/>
            <person name="Gojobori T."/>
            <person name="Green R.E."/>
            <person name="Gustincich S."/>
            <person name="Harbers M."/>
            <person name="Hayashi Y."/>
            <person name="Hensch T.K."/>
            <person name="Hirokawa N."/>
            <person name="Hill D."/>
            <person name="Huminiecki L."/>
            <person name="Iacono M."/>
            <person name="Ikeo K."/>
            <person name="Iwama A."/>
            <person name="Ishikawa T."/>
            <person name="Jakt M."/>
            <person name="Kanapin A."/>
            <person name="Katoh M."/>
            <person name="Kawasawa Y."/>
            <person name="Kelso J."/>
            <person name="Kitamura H."/>
            <person name="Kitano H."/>
            <person name="Kollias G."/>
            <person name="Krishnan S.P."/>
            <person name="Kruger A."/>
            <person name="Kummerfeld S.K."/>
            <person name="Kurochkin I.V."/>
            <person name="Lareau L.F."/>
            <person name="Lazarevic D."/>
            <person name="Lipovich L."/>
            <person name="Liu J."/>
            <person name="Liuni S."/>
            <person name="McWilliam S."/>
            <person name="Madan Babu M."/>
            <person name="Madera M."/>
            <person name="Marchionni L."/>
            <person name="Matsuda H."/>
            <person name="Matsuzawa S."/>
            <person name="Miki H."/>
            <person name="Mignone F."/>
            <person name="Miyake S."/>
            <person name="Morris K."/>
            <person name="Mottagui-Tabar S."/>
            <person name="Mulder N."/>
            <person name="Nakano N."/>
            <person name="Nakauchi H."/>
            <person name="Ng P."/>
            <person name="Nilsson R."/>
            <person name="Nishiguchi S."/>
            <person name="Nishikawa S."/>
            <person name="Nori F."/>
            <person name="Ohara O."/>
            <person name="Okazaki Y."/>
            <person name="Orlando V."/>
            <person name="Pang K.C."/>
            <person name="Pavan W.J."/>
            <person name="Pavesi G."/>
            <person name="Pesole G."/>
            <person name="Petrovsky N."/>
            <person name="Piazza S."/>
            <person name="Reed J."/>
            <person name="Reid J.F."/>
            <person name="Ring B.Z."/>
            <person name="Ringwald M."/>
            <person name="Rost B."/>
            <person name="Ruan Y."/>
            <person name="Salzberg S.L."/>
            <person name="Sandelin A."/>
            <person name="Schneider C."/>
            <person name="Schoenbach C."/>
            <person name="Sekiguchi K."/>
            <person name="Semple C.A."/>
            <person name="Seno S."/>
            <person name="Sessa L."/>
            <person name="Sheng Y."/>
            <person name="Shibata Y."/>
            <person name="Shimada H."/>
            <person name="Shimada K."/>
            <person name="Silva D."/>
            <person name="Sinclair B."/>
            <person name="Sperling S."/>
            <person name="Stupka E."/>
            <person name="Sugiura K."/>
            <person name="Sultana R."/>
            <person name="Takenaka Y."/>
            <person name="Taki K."/>
            <person name="Tammoja K."/>
            <person name="Tan S.L."/>
            <person name="Tang S."/>
            <person name="Taylor M.S."/>
            <person name="Tegner J."/>
            <person name="Teichmann S.A."/>
            <person name="Ueda H.R."/>
            <person name="van Nimwegen E."/>
            <person name="Verardo R."/>
            <person name="Wei C.L."/>
            <person name="Yagi K."/>
            <person name="Yamanishi H."/>
            <person name="Zabarovsky E."/>
            <person name="Zhu S."/>
            <person name="Zimmer A."/>
            <person name="Hide W."/>
            <person name="Bult C."/>
            <person name="Grimmond S.M."/>
            <person name="Teasdale R.D."/>
            <person name="Liu E.T."/>
            <person name="Brusic V."/>
            <person name="Quackenbush J."/>
            <person name="Wahlestedt C."/>
            <person name="Mattick J.S."/>
            <person name="Hume D.A."/>
            <person name="Kai C."/>
            <person name="Sasaki D."/>
            <person name="Tomaru Y."/>
            <person name="Fukuda S."/>
            <person name="Kanamori-Katayama M."/>
            <person name="Suzuki M."/>
            <person name="Aoki J."/>
            <person name="Arakawa T."/>
            <person name="Iida J."/>
            <person name="Imamura K."/>
            <person name="Itoh M."/>
            <person name="Kato T."/>
            <person name="Kawaji H."/>
            <person name="Kawagashira N."/>
            <person name="Kawashima T."/>
            <person name="Kojima M."/>
            <person name="Kondo S."/>
            <person name="Konno H."/>
            <person name="Nakano K."/>
            <person name="Ninomiya N."/>
            <person name="Nishio T."/>
            <person name="Okada M."/>
            <person name="Plessy C."/>
            <person name="Shibata K."/>
            <person name="Shiraki T."/>
            <person name="Suzuki S."/>
            <person name="Tagami M."/>
            <person name="Waki K."/>
            <person name="Watahiki A."/>
            <person name="Okamura-Oho Y."/>
            <person name="Suzuki H."/>
            <person name="Kawai J."/>
            <person name="Hayashizaki Y."/>
        </authorList>
    </citation>
    <scope>NUCLEOTIDE SEQUENCE [LARGE SCALE MRNA]</scope>
    <source>
        <strain>C57BL/6J</strain>
        <tissue>Adrenal gland</tissue>
    </source>
</reference>
<reference key="3">
    <citation type="journal article" date="2004" name="Genome Res.">
        <title>The status, quality, and expansion of the NIH full-length cDNA project: the Mammalian Gene Collection (MGC).</title>
        <authorList>
            <consortium name="The MGC Project Team"/>
        </authorList>
    </citation>
    <scope>NUCLEOTIDE SEQUENCE [LARGE SCALE MRNA]</scope>
    <source>
        <strain>C57BL/6J</strain>
        <tissue>Eye</tissue>
    </source>
</reference>
<reference key="4">
    <citation type="journal article" date="2010" name="Cell">
        <title>A tissue-specific atlas of mouse protein phosphorylation and expression.</title>
        <authorList>
            <person name="Huttlin E.L."/>
            <person name="Jedrychowski M.P."/>
            <person name="Elias J.E."/>
            <person name="Goswami T."/>
            <person name="Rad R."/>
            <person name="Beausoleil S.A."/>
            <person name="Villen J."/>
            <person name="Haas W."/>
            <person name="Sowa M.E."/>
            <person name="Gygi S.P."/>
        </authorList>
    </citation>
    <scope>IDENTIFICATION BY MASS SPECTROMETRY [LARGE SCALE ANALYSIS]</scope>
    <source>
        <tissue>Spleen</tissue>
    </source>
</reference>
<reference key="5">
    <citation type="journal article" date="2017" name="EMBO J.">
        <title>Fam60a defines a variant Sin3a-Hdac complex in embryonic stem cells required for self-renewal.</title>
        <authorList>
            <person name="Streubel G."/>
            <person name="Fitzpatrick D.J."/>
            <person name="Oliviero G."/>
            <person name="Scelfo A."/>
            <person name="Moran B."/>
            <person name="Das S."/>
            <person name="Munawar N."/>
            <person name="Watson A."/>
            <person name="Wynne K."/>
            <person name="Negri G.L."/>
            <person name="Dillon E.T."/>
            <person name="Jammula S."/>
            <person name="Hokamp K."/>
            <person name="O'Connor D.P."/>
            <person name="Pasini D."/>
            <person name="Cagney G."/>
            <person name="Bracken A.P."/>
        </authorList>
    </citation>
    <scope>FUNCTION</scope>
    <scope>IDENTIFICATION IN A COMPLEX WITH SIN3A; HDAC1; SAP30; RBBP4; OGT AND TET1</scope>
    <scope>INTERACTION WITH SIN3A AND OGT</scope>
    <scope>SUBCELLULAR LOCATION</scope>
    <scope>TISSUE SPECIFICITY</scope>
</reference>
<sequence>MFGFHKPKMYRSIEGCCICRAKSSSSRFTDSKRYEKDFQSCFGLHETRSGDICNACVLLVKRWKKLPAGSKKNWNHVVDARAGPSLKTTLKPKKVKTLSGNRMKSNQISKLQKEFKRHNSDAHSTTSSASPAQSPCYSNQSDEGSDTEMASSSNRTPVFSFLDLTYWKRQKICCGIIYKGRFGEVLIDTHLFKPCCSSKKAAAEKPEEQGPAPLPISTQEW</sequence>
<feature type="chain" id="PRO_0000187087" description="SIN3-HDAC complex-associated factor">
    <location>
        <begin position="1"/>
        <end position="221"/>
    </location>
</feature>
<feature type="region of interest" description="Disordered" evidence="2">
    <location>
        <begin position="110"/>
        <end position="153"/>
    </location>
</feature>
<feature type="region of interest" description="Disordered" evidence="2">
    <location>
        <begin position="201"/>
        <end position="221"/>
    </location>
</feature>
<feature type="compositionally biased region" description="Basic and acidic residues" evidence="2">
    <location>
        <begin position="111"/>
        <end position="121"/>
    </location>
</feature>
<feature type="compositionally biased region" description="Low complexity" evidence="2">
    <location>
        <begin position="124"/>
        <end position="135"/>
    </location>
</feature>
<feature type="compositionally biased region" description="Polar residues" evidence="2">
    <location>
        <begin position="136"/>
        <end position="153"/>
    </location>
</feature>
<feature type="sequence conflict" description="In Ref. 1; AAB09547." evidence="5" ref="1">
    <original>T</original>
    <variation>Q</variation>
    <location>
        <position position="29"/>
    </location>
</feature>
<evidence type="ECO:0000250" key="1">
    <source>
        <dbReference type="UniProtKB" id="Q9NP50"/>
    </source>
</evidence>
<evidence type="ECO:0000256" key="2">
    <source>
        <dbReference type="SAM" id="MobiDB-lite"/>
    </source>
</evidence>
<evidence type="ECO:0000269" key="3">
    <source>
    </source>
</evidence>
<evidence type="ECO:0000303" key="4">
    <source ref="1"/>
</evidence>
<evidence type="ECO:0000305" key="5"/>
<gene>
    <name type="primary">Sinhcaf</name>
    <name type="synonym">Fam60a</name>
    <name evidence="4" type="synonym">Tera</name>
</gene>
<accession>Q8C8M1</accession>
<accession>P70361</accession>
<accession>Q3TLD2</accession>